<protein>
    <recommendedName>
        <fullName>Globin CTT-VIIB-4</fullName>
    </recommendedName>
    <alternativeName>
        <fullName>Erythrocruorin</fullName>
    </alternativeName>
</protein>
<keyword id="KW-0903">Direct protein sequencing</keyword>
<keyword id="KW-0349">Heme</keyword>
<keyword id="KW-0408">Iron</keyword>
<keyword id="KW-0479">Metal-binding</keyword>
<keyword id="KW-0561">Oxygen transport</keyword>
<keyword id="KW-0732">Signal</keyword>
<keyword id="KW-0813">Transport</keyword>
<comment type="subunit">
    <text>Homodimer.</text>
</comment>
<comment type="miscellaneous">
    <text>There are at least 12 different components in Midge globin.</text>
</comment>
<comment type="miscellaneous">
    <text>There are at least nine genes for VIIB variants.</text>
</comment>
<comment type="similarity">
    <text evidence="1">Belongs to the globin family.</text>
</comment>
<evidence type="ECO:0000255" key="1">
    <source>
        <dbReference type="PROSITE-ProRule" id="PRU00238"/>
    </source>
</evidence>
<evidence type="ECO:0000269" key="2">
    <source>
    </source>
</evidence>
<proteinExistence type="evidence at protein level"/>
<dbReference type="EMBL" id="U07703">
    <property type="protein sequence ID" value="AAA85491.1"/>
    <property type="molecule type" value="Genomic_DNA"/>
</dbReference>
<dbReference type="PIR" id="A02547">
    <property type="entry name" value="GGICE8"/>
</dbReference>
<dbReference type="SMR" id="P84296"/>
<dbReference type="Allergome" id="207">
    <property type="allergen name" value="Chi t 3"/>
</dbReference>
<dbReference type="Allergome" id="212">
    <property type="allergen name" value="Chi t 3.0601"/>
</dbReference>
<dbReference type="GO" id="GO:0005576">
    <property type="term" value="C:extracellular region"/>
    <property type="evidence" value="ECO:0007669"/>
    <property type="project" value="InterPro"/>
</dbReference>
<dbReference type="GO" id="GO:0005833">
    <property type="term" value="C:hemoglobin complex"/>
    <property type="evidence" value="ECO:0007669"/>
    <property type="project" value="InterPro"/>
</dbReference>
<dbReference type="GO" id="GO:0020037">
    <property type="term" value="F:heme binding"/>
    <property type="evidence" value="ECO:0007669"/>
    <property type="project" value="InterPro"/>
</dbReference>
<dbReference type="GO" id="GO:0046872">
    <property type="term" value="F:metal ion binding"/>
    <property type="evidence" value="ECO:0007669"/>
    <property type="project" value="UniProtKB-KW"/>
</dbReference>
<dbReference type="GO" id="GO:0019825">
    <property type="term" value="F:oxygen binding"/>
    <property type="evidence" value="ECO:0007669"/>
    <property type="project" value="InterPro"/>
</dbReference>
<dbReference type="GO" id="GO:0005344">
    <property type="term" value="F:oxygen carrier activity"/>
    <property type="evidence" value="ECO:0007669"/>
    <property type="project" value="UniProtKB-KW"/>
</dbReference>
<dbReference type="CDD" id="cd01040">
    <property type="entry name" value="Mb-like"/>
    <property type="match status" value="1"/>
</dbReference>
<dbReference type="Gene3D" id="1.10.490.10">
    <property type="entry name" value="Globins"/>
    <property type="match status" value="1"/>
</dbReference>
<dbReference type="InterPro" id="IPR002336">
    <property type="entry name" value="Erythrocruorin"/>
</dbReference>
<dbReference type="InterPro" id="IPR000971">
    <property type="entry name" value="Globin"/>
</dbReference>
<dbReference type="InterPro" id="IPR009050">
    <property type="entry name" value="Globin-like_sf"/>
</dbReference>
<dbReference type="InterPro" id="IPR012292">
    <property type="entry name" value="Globin/Proto"/>
</dbReference>
<dbReference type="InterPro" id="IPR044399">
    <property type="entry name" value="Mb-like_M"/>
</dbReference>
<dbReference type="PANTHER" id="PTHR47217">
    <property type="entry name" value="GLOBIN-LIKE PROTEIN"/>
    <property type="match status" value="1"/>
</dbReference>
<dbReference type="PANTHER" id="PTHR47217:SF1">
    <property type="entry name" value="GLOBIN-LIKE PROTEIN"/>
    <property type="match status" value="1"/>
</dbReference>
<dbReference type="Pfam" id="PF00042">
    <property type="entry name" value="Globin"/>
    <property type="match status" value="1"/>
</dbReference>
<dbReference type="PRINTS" id="PR00611">
    <property type="entry name" value="ERYTHCRUORIN"/>
</dbReference>
<dbReference type="SUPFAM" id="SSF46458">
    <property type="entry name" value="Globin-like"/>
    <property type="match status" value="1"/>
</dbReference>
<dbReference type="PROSITE" id="PS01033">
    <property type="entry name" value="GLOBIN"/>
    <property type="match status" value="1"/>
</dbReference>
<organism>
    <name type="scientific">Chironomus thummi thummi</name>
    <name type="common">Midge</name>
    <dbReference type="NCBI Taxonomy" id="7155"/>
    <lineage>
        <taxon>Eukaryota</taxon>
        <taxon>Metazoa</taxon>
        <taxon>Ecdysozoa</taxon>
        <taxon>Arthropoda</taxon>
        <taxon>Hexapoda</taxon>
        <taxon>Insecta</taxon>
        <taxon>Pterygota</taxon>
        <taxon>Neoptera</taxon>
        <taxon>Endopterygota</taxon>
        <taxon>Diptera</taxon>
        <taxon>Nematocera</taxon>
        <taxon>Chironomoidea</taxon>
        <taxon>Chironomidae</taxon>
        <taxon>Chironominae</taxon>
        <taxon>Chironomus</taxon>
    </lineage>
</organism>
<gene>
    <name type="primary">CTT-7B4</name>
</gene>
<feature type="signal peptide" evidence="2">
    <location>
        <begin position="1"/>
        <end position="16"/>
    </location>
</feature>
<feature type="chain" id="PRO_0000011195" description="Globin CTT-VIIB-4">
    <location>
        <begin position="17"/>
        <end position="161"/>
    </location>
</feature>
<feature type="domain" description="Globin" evidence="1">
    <location>
        <begin position="18"/>
        <end position="161"/>
    </location>
</feature>
<feature type="binding site" description="distal binding residue" evidence="1">
    <location>
        <position position="76"/>
    </location>
    <ligand>
        <name>heme b</name>
        <dbReference type="ChEBI" id="CHEBI:60344"/>
    </ligand>
    <ligandPart>
        <name>Fe</name>
        <dbReference type="ChEBI" id="CHEBI:18248"/>
    </ligandPart>
</feature>
<feature type="binding site" description="proximal binding residue" evidence="1">
    <location>
        <position position="111"/>
    </location>
    <ligand>
        <name>heme b</name>
        <dbReference type="ChEBI" id="CHEBI:60344"/>
    </ligand>
    <ligandPart>
        <name>Fe</name>
        <dbReference type="ChEBI" id="CHEBI:18248"/>
    </ligandPart>
</feature>
<reference key="1">
    <citation type="journal article" date="1987" name="Nucleic Acids Res.">
        <title>Nucleotide sequence of the intronless gene expressing a member of the globin VIIB subfamily from Chironomus thummi (Diptera).</title>
        <authorList>
            <person name="Trewitt P.M."/>
            <person name="Saffarini D.A."/>
            <person name="Bergtrom G."/>
        </authorList>
    </citation>
    <scope>NUCLEOTIDE SEQUENCE [GENOMIC DNA]</scope>
    <source>
        <tissue>Larva</tissue>
    </source>
</reference>
<reference key="2">
    <citation type="journal article" date="1995" name="J. Mol. Evol.">
        <title>Molecular evolutionary analysis of the YWVZ/7B globin gene cluster of the insect Chironomus thummi.</title>
        <authorList>
            <person name="Trewitt P.M."/>
            <person name="Luhm R.A."/>
            <person name="Samad F."/>
            <person name="Ramakrishnan S."/>
            <person name="Kao W.-Y."/>
            <person name="Bergtrom G."/>
        </authorList>
    </citation>
    <scope>NUCLEOTIDE SEQUENCE [GENOMIC DNA]</scope>
    <source>
        <tissue>Larva</tissue>
    </source>
</reference>
<reference key="3">
    <citation type="journal article" date="1979" name="Hoppe-Seyler's Z. Physiol. Chem.">
        <title>Hemoglobins, XXVI. Analysis of the primary structure of the dimeric insect haemoglobin CTT VIIB (Erythrocruorin) from Chironomus thummi thummi, Diptera.</title>
        <authorList>
            <person name="Sladic-Simic D."/>
            <person name="Kleinschmidt T."/>
            <person name="Braunitzer G."/>
        </authorList>
    </citation>
    <scope>PROTEIN SEQUENCE OF 17-161 (MIXTURE OF ISOZYMES)</scope>
</reference>
<sequence length="161" mass="16804">MKFFAVLALCIVGAIASPLTADEASLVQSSWKAVSHNEVDILAAVFAAYPDIQAKFPQFAGKDLASIKDTGAFATHATRIVSFLSEVIALSGNASNAAAVEGLLNKLGSDHKARGVSAAQFGEFRTALVSYLSNHVSWGDNVAAAWNKALDNTMAVAVAHL</sequence>
<accession>P84296</accession>
<accession>P02225</accession>
<accession>P12292</accession>
<name>GLB74_CHITH</name>